<gene>
    <name evidence="1" type="primary">rplA</name>
    <name type="ordered locus">Dhaf_0407</name>
</gene>
<name>RL1_DESHD</name>
<dbReference type="EMBL" id="CP001336">
    <property type="protein sequence ID" value="ACL18474.1"/>
    <property type="molecule type" value="Genomic_DNA"/>
</dbReference>
<dbReference type="RefSeq" id="WP_005810196.1">
    <property type="nucleotide sequence ID" value="NC_011830.1"/>
</dbReference>
<dbReference type="SMR" id="B8G1V1"/>
<dbReference type="KEGG" id="dhd:Dhaf_0407"/>
<dbReference type="HOGENOM" id="CLU_062853_0_0_9"/>
<dbReference type="Proteomes" id="UP000007726">
    <property type="component" value="Chromosome"/>
</dbReference>
<dbReference type="GO" id="GO:0015934">
    <property type="term" value="C:large ribosomal subunit"/>
    <property type="evidence" value="ECO:0007669"/>
    <property type="project" value="InterPro"/>
</dbReference>
<dbReference type="GO" id="GO:0019843">
    <property type="term" value="F:rRNA binding"/>
    <property type="evidence" value="ECO:0007669"/>
    <property type="project" value="UniProtKB-UniRule"/>
</dbReference>
<dbReference type="GO" id="GO:0003735">
    <property type="term" value="F:structural constituent of ribosome"/>
    <property type="evidence" value="ECO:0007669"/>
    <property type="project" value="InterPro"/>
</dbReference>
<dbReference type="GO" id="GO:0000049">
    <property type="term" value="F:tRNA binding"/>
    <property type="evidence" value="ECO:0007669"/>
    <property type="project" value="UniProtKB-KW"/>
</dbReference>
<dbReference type="GO" id="GO:0006417">
    <property type="term" value="P:regulation of translation"/>
    <property type="evidence" value="ECO:0007669"/>
    <property type="project" value="UniProtKB-KW"/>
</dbReference>
<dbReference type="GO" id="GO:0006412">
    <property type="term" value="P:translation"/>
    <property type="evidence" value="ECO:0007669"/>
    <property type="project" value="UniProtKB-UniRule"/>
</dbReference>
<dbReference type="CDD" id="cd00403">
    <property type="entry name" value="Ribosomal_L1"/>
    <property type="match status" value="1"/>
</dbReference>
<dbReference type="FunFam" id="3.40.50.790:FF:000001">
    <property type="entry name" value="50S ribosomal protein L1"/>
    <property type="match status" value="1"/>
</dbReference>
<dbReference type="Gene3D" id="3.30.190.20">
    <property type="match status" value="1"/>
</dbReference>
<dbReference type="Gene3D" id="3.40.50.790">
    <property type="match status" value="1"/>
</dbReference>
<dbReference type="HAMAP" id="MF_01318_B">
    <property type="entry name" value="Ribosomal_uL1_B"/>
    <property type="match status" value="1"/>
</dbReference>
<dbReference type="InterPro" id="IPR005878">
    <property type="entry name" value="Ribosom_uL1_bac-type"/>
</dbReference>
<dbReference type="InterPro" id="IPR002143">
    <property type="entry name" value="Ribosomal_uL1"/>
</dbReference>
<dbReference type="InterPro" id="IPR023674">
    <property type="entry name" value="Ribosomal_uL1-like"/>
</dbReference>
<dbReference type="InterPro" id="IPR028364">
    <property type="entry name" value="Ribosomal_uL1/biogenesis"/>
</dbReference>
<dbReference type="InterPro" id="IPR016095">
    <property type="entry name" value="Ribosomal_uL1_3-a/b-sand"/>
</dbReference>
<dbReference type="InterPro" id="IPR023673">
    <property type="entry name" value="Ribosomal_uL1_CS"/>
</dbReference>
<dbReference type="NCBIfam" id="TIGR01169">
    <property type="entry name" value="rplA_bact"/>
    <property type="match status" value="1"/>
</dbReference>
<dbReference type="PANTHER" id="PTHR36427">
    <property type="entry name" value="54S RIBOSOMAL PROTEIN L1, MITOCHONDRIAL"/>
    <property type="match status" value="1"/>
</dbReference>
<dbReference type="PANTHER" id="PTHR36427:SF3">
    <property type="entry name" value="LARGE RIBOSOMAL SUBUNIT PROTEIN UL1M"/>
    <property type="match status" value="1"/>
</dbReference>
<dbReference type="Pfam" id="PF00687">
    <property type="entry name" value="Ribosomal_L1"/>
    <property type="match status" value="1"/>
</dbReference>
<dbReference type="PIRSF" id="PIRSF002155">
    <property type="entry name" value="Ribosomal_L1"/>
    <property type="match status" value="1"/>
</dbReference>
<dbReference type="SUPFAM" id="SSF56808">
    <property type="entry name" value="Ribosomal protein L1"/>
    <property type="match status" value="1"/>
</dbReference>
<dbReference type="PROSITE" id="PS01199">
    <property type="entry name" value="RIBOSOMAL_L1"/>
    <property type="match status" value="1"/>
</dbReference>
<evidence type="ECO:0000255" key="1">
    <source>
        <dbReference type="HAMAP-Rule" id="MF_01318"/>
    </source>
</evidence>
<evidence type="ECO:0000305" key="2"/>
<sequence length="230" mass="24623">MAKVGKNYQEAVKAFDRAALHEPMEALAVVKKIAKAKFDETVEVAFKLGIDTRHADQQIRGALVLPHGTGKTRSVLVFAKGDKAKEAEAAGADFVGAEDMIAKIEQGWFGFDVVVATPDMMGMVGKLGRVLGPKGLMPNPKTGTVTFDVAKAVKEIKAGKIEYRADKAGIIHAPIGKVSFSEEQLYQNYKVLVETLVKAKPAAAKGQYIRSVTVSSTMGPGVRINPVKAN</sequence>
<feature type="chain" id="PRO_1000165676" description="Large ribosomal subunit protein uL1">
    <location>
        <begin position="1"/>
        <end position="230"/>
    </location>
</feature>
<accession>B8G1V1</accession>
<organism>
    <name type="scientific">Desulfitobacterium hafniense (strain DSM 10664 / DCB-2)</name>
    <dbReference type="NCBI Taxonomy" id="272564"/>
    <lineage>
        <taxon>Bacteria</taxon>
        <taxon>Bacillati</taxon>
        <taxon>Bacillota</taxon>
        <taxon>Clostridia</taxon>
        <taxon>Eubacteriales</taxon>
        <taxon>Desulfitobacteriaceae</taxon>
        <taxon>Desulfitobacterium</taxon>
    </lineage>
</organism>
<keyword id="KW-0678">Repressor</keyword>
<keyword id="KW-0687">Ribonucleoprotein</keyword>
<keyword id="KW-0689">Ribosomal protein</keyword>
<keyword id="KW-0694">RNA-binding</keyword>
<keyword id="KW-0699">rRNA-binding</keyword>
<keyword id="KW-0810">Translation regulation</keyword>
<keyword id="KW-0820">tRNA-binding</keyword>
<proteinExistence type="inferred from homology"/>
<protein>
    <recommendedName>
        <fullName evidence="1">Large ribosomal subunit protein uL1</fullName>
    </recommendedName>
    <alternativeName>
        <fullName evidence="2">50S ribosomal protein L1</fullName>
    </alternativeName>
</protein>
<reference key="1">
    <citation type="journal article" date="2012" name="BMC Microbiol.">
        <title>Genome sequence of Desulfitobacterium hafniense DCB-2, a Gram-positive anaerobe capable of dehalogenation and metal reduction.</title>
        <authorList>
            <person name="Kim S.H."/>
            <person name="Harzman C."/>
            <person name="Davis J.K."/>
            <person name="Hutcheson R."/>
            <person name="Broderick J.B."/>
            <person name="Marsh T.L."/>
            <person name="Tiedje J.M."/>
        </authorList>
    </citation>
    <scope>NUCLEOTIDE SEQUENCE [LARGE SCALE GENOMIC DNA]</scope>
    <source>
        <strain>DSM 10664 / DCB-2</strain>
    </source>
</reference>
<comment type="function">
    <text evidence="1">Binds directly to 23S rRNA. The L1 stalk is quite mobile in the ribosome, and is involved in E site tRNA release.</text>
</comment>
<comment type="function">
    <text evidence="1">Protein L1 is also a translational repressor protein, it controls the translation of the L11 operon by binding to its mRNA.</text>
</comment>
<comment type="subunit">
    <text evidence="1">Part of the 50S ribosomal subunit.</text>
</comment>
<comment type="similarity">
    <text evidence="1">Belongs to the universal ribosomal protein uL1 family.</text>
</comment>